<proteinExistence type="inferred from homology"/>
<name>PRP28_LODEL</name>
<keyword id="KW-0067">ATP-binding</keyword>
<keyword id="KW-0963">Cytoplasm</keyword>
<keyword id="KW-0347">Helicase</keyword>
<keyword id="KW-0378">Hydrolase</keyword>
<keyword id="KW-0507">mRNA processing</keyword>
<keyword id="KW-0508">mRNA splicing</keyword>
<keyword id="KW-0547">Nucleotide-binding</keyword>
<keyword id="KW-0539">Nucleus</keyword>
<keyword id="KW-1185">Reference proteome</keyword>
<protein>
    <recommendedName>
        <fullName>Pre-mRNA-splicing ATP-dependent RNA helicase PRP28</fullName>
        <ecNumber>3.6.4.13</ecNumber>
    </recommendedName>
</protein>
<feature type="chain" id="PRO_0000294634" description="Pre-mRNA-splicing ATP-dependent RNA helicase PRP28">
    <location>
        <begin position="1"/>
        <end position="597"/>
    </location>
</feature>
<feature type="domain" description="Helicase ATP-binding" evidence="2">
    <location>
        <begin position="216"/>
        <end position="417"/>
    </location>
</feature>
<feature type="domain" description="Helicase C-terminal" evidence="3">
    <location>
        <begin position="444"/>
        <end position="595"/>
    </location>
</feature>
<feature type="region of interest" description="Disordered" evidence="4">
    <location>
        <begin position="21"/>
        <end position="83"/>
    </location>
</feature>
<feature type="region of interest" description="Disordered" evidence="4">
    <location>
        <begin position="116"/>
        <end position="140"/>
    </location>
</feature>
<feature type="short sequence motif" description="Q motif">
    <location>
        <begin position="185"/>
        <end position="213"/>
    </location>
</feature>
<feature type="short sequence motif" description="DEAD box">
    <location>
        <begin position="349"/>
        <end position="352"/>
    </location>
</feature>
<feature type="compositionally biased region" description="Polar residues" evidence="4">
    <location>
        <begin position="39"/>
        <end position="80"/>
    </location>
</feature>
<feature type="binding site" evidence="2">
    <location>
        <begin position="229"/>
        <end position="236"/>
    </location>
    <ligand>
        <name>ATP</name>
        <dbReference type="ChEBI" id="CHEBI:30616"/>
    </ligand>
</feature>
<gene>
    <name type="primary">PRP28</name>
    <name type="ORF">LELG_00909</name>
</gene>
<evidence type="ECO:0000250" key="1"/>
<evidence type="ECO:0000255" key="2">
    <source>
        <dbReference type="PROSITE-ProRule" id="PRU00541"/>
    </source>
</evidence>
<evidence type="ECO:0000255" key="3">
    <source>
        <dbReference type="PROSITE-ProRule" id="PRU00542"/>
    </source>
</evidence>
<evidence type="ECO:0000256" key="4">
    <source>
        <dbReference type="SAM" id="MobiDB-lite"/>
    </source>
</evidence>
<evidence type="ECO:0000305" key="5"/>
<organism>
    <name type="scientific">Lodderomyces elongisporus (strain ATCC 11503 / CBS 2605 / JCM 1781 / NBRC 1676 / NRRL YB-4239)</name>
    <name type="common">Yeast</name>
    <name type="synonym">Saccharomyces elongisporus</name>
    <dbReference type="NCBI Taxonomy" id="379508"/>
    <lineage>
        <taxon>Eukaryota</taxon>
        <taxon>Fungi</taxon>
        <taxon>Dikarya</taxon>
        <taxon>Ascomycota</taxon>
        <taxon>Saccharomycotina</taxon>
        <taxon>Pichiomycetes</taxon>
        <taxon>Debaryomycetaceae</taxon>
        <taxon>Candida/Lodderomyces clade</taxon>
        <taxon>Lodderomyces</taxon>
    </lineage>
</organism>
<reference key="1">
    <citation type="journal article" date="2009" name="Nature">
        <title>Evolution of pathogenicity and sexual reproduction in eight Candida genomes.</title>
        <authorList>
            <person name="Butler G."/>
            <person name="Rasmussen M.D."/>
            <person name="Lin M.F."/>
            <person name="Santos M.A.S."/>
            <person name="Sakthikumar S."/>
            <person name="Munro C.A."/>
            <person name="Rheinbay E."/>
            <person name="Grabherr M."/>
            <person name="Forche A."/>
            <person name="Reedy J.L."/>
            <person name="Agrafioti I."/>
            <person name="Arnaud M.B."/>
            <person name="Bates S."/>
            <person name="Brown A.J.P."/>
            <person name="Brunke S."/>
            <person name="Costanzo M.C."/>
            <person name="Fitzpatrick D.A."/>
            <person name="de Groot P.W.J."/>
            <person name="Harris D."/>
            <person name="Hoyer L.L."/>
            <person name="Hube B."/>
            <person name="Klis F.M."/>
            <person name="Kodira C."/>
            <person name="Lennard N."/>
            <person name="Logue M.E."/>
            <person name="Martin R."/>
            <person name="Neiman A.M."/>
            <person name="Nikolaou E."/>
            <person name="Quail M.A."/>
            <person name="Quinn J."/>
            <person name="Santos M.C."/>
            <person name="Schmitzberger F.F."/>
            <person name="Sherlock G."/>
            <person name="Shah P."/>
            <person name="Silverstein K.A.T."/>
            <person name="Skrzypek M.S."/>
            <person name="Soll D."/>
            <person name="Staggs R."/>
            <person name="Stansfield I."/>
            <person name="Stumpf M.P.H."/>
            <person name="Sudbery P.E."/>
            <person name="Srikantha T."/>
            <person name="Zeng Q."/>
            <person name="Berman J."/>
            <person name="Berriman M."/>
            <person name="Heitman J."/>
            <person name="Gow N.A.R."/>
            <person name="Lorenz M.C."/>
            <person name="Birren B.W."/>
            <person name="Kellis M."/>
            <person name="Cuomo C.A."/>
        </authorList>
    </citation>
    <scope>NUCLEOTIDE SEQUENCE [LARGE SCALE GENOMIC DNA]</scope>
    <source>
        <strain>ATCC 11503 / BCRC 21390 / CBS 2605 / JCM 1781 / NBRC 1676 / NRRL YB-4239</strain>
    </source>
</reference>
<sequence length="597" mass="67685">MSKRPIPIDDLLKEDAIVPKYIPKSKRAKSSNGPGEDGANTTLKLQYPQSSVNHGSAVSRSTQFSAHQKSSTRPTTSLQPPSKLRHKKFQFDWDDIDDPHYNPQPLYSFELDQLGVENGDNYNDNKNNNDDDDNFDFQDPLLHDDRNSGHWSTKLLSEMTDRDWRIFNEDYGITTKGKKIPHATRSWDESGLDPKILASLKSFGFRQPTPVQRASIPISLELRDVVGVAETGSGKTLAFLLPLLHYLSRVDGNYLNYEKVRNEPLALVLAPTRELALQITQEAEKFGKQLGFNVLSIIGGRQYQETMDQIDNMIVGRGVHIVVGTPGRLLDSVERKILNFSKCYYLVMDEADRMIDMGFEKDLNKLINLLPKNEKLSTTIDGKLFHLTKRLTMMYTATISPPIEKITKSYLIDPAYIYIGGAGEALDNIDQHFDYLSTYAESARLSKLIKVVQGHKRRNRNALVIIFANFKHVCDVLSLELEQNNLLNVVIHGSKSQEAREEALEDFRTHQAPILVATDVAARGIDVPNVSLVINYQMSKKFDEYIHRIGRTGRAGNLGESYTFLDDADAETFMPLKKFLKSGRKKVPEWLYRYNIG</sequence>
<comment type="function">
    <text evidence="1">ATP-dependent RNA helicase involved in mRNA splicing. May destabilize the U1/5'-splice site duplex to permit an effective competition for the 5'-splice site by the U6 snRNA, resulting in the switch between U1 and U6 at the 5'-splice site. May also act to unwind the U4/U6 base-pairing interaction in the U4/U6/U5 snRNP, facilitating the first covalent step of splicing (By similarity).</text>
</comment>
<comment type="catalytic activity">
    <reaction>
        <text>ATP + H2O = ADP + phosphate + H(+)</text>
        <dbReference type="Rhea" id="RHEA:13065"/>
        <dbReference type="ChEBI" id="CHEBI:15377"/>
        <dbReference type="ChEBI" id="CHEBI:15378"/>
        <dbReference type="ChEBI" id="CHEBI:30616"/>
        <dbReference type="ChEBI" id="CHEBI:43474"/>
        <dbReference type="ChEBI" id="CHEBI:456216"/>
        <dbReference type="EC" id="3.6.4.13"/>
    </reaction>
</comment>
<comment type="subunit">
    <text evidence="1">Component of the U5 snRNP complex.</text>
</comment>
<comment type="subcellular location">
    <subcellularLocation>
        <location evidence="1">Cytoplasm</location>
    </subcellularLocation>
    <subcellularLocation>
        <location evidence="1">Nucleus</location>
    </subcellularLocation>
</comment>
<comment type="domain">
    <text>The Q motif is unique to and characteristic of the DEAD box family of RNA helicases and controls ATP binding and hydrolysis.</text>
</comment>
<comment type="similarity">
    <text evidence="5">Belongs to the DEAD box helicase family. DDX23/PRP28 subfamily.</text>
</comment>
<dbReference type="EC" id="3.6.4.13"/>
<dbReference type="EMBL" id="CH981524">
    <property type="protein sequence ID" value="EDK42731.1"/>
    <property type="molecule type" value="Genomic_DNA"/>
</dbReference>
<dbReference type="RefSeq" id="XP_001528389.1">
    <property type="nucleotide sequence ID" value="XM_001528339.1"/>
</dbReference>
<dbReference type="SMR" id="A5DU73"/>
<dbReference type="FunCoup" id="A5DU73">
    <property type="interactions" value="889"/>
</dbReference>
<dbReference type="STRING" id="379508.A5DU73"/>
<dbReference type="GeneID" id="5235302"/>
<dbReference type="KEGG" id="lel:PVL30_000879"/>
<dbReference type="VEuPathDB" id="FungiDB:LELG_00909"/>
<dbReference type="eggNOG" id="KOG0333">
    <property type="taxonomic scope" value="Eukaryota"/>
</dbReference>
<dbReference type="HOGENOM" id="CLU_003041_11_4_1"/>
<dbReference type="InParanoid" id="A5DU73"/>
<dbReference type="OMA" id="IFINYKR"/>
<dbReference type="OrthoDB" id="196131at2759"/>
<dbReference type="Proteomes" id="UP000001996">
    <property type="component" value="Unassembled WGS sequence"/>
</dbReference>
<dbReference type="GO" id="GO:0005737">
    <property type="term" value="C:cytoplasm"/>
    <property type="evidence" value="ECO:0007669"/>
    <property type="project" value="UniProtKB-SubCell"/>
</dbReference>
<dbReference type="GO" id="GO:0005634">
    <property type="term" value="C:nucleus"/>
    <property type="evidence" value="ECO:0007669"/>
    <property type="project" value="UniProtKB-SubCell"/>
</dbReference>
<dbReference type="GO" id="GO:0005524">
    <property type="term" value="F:ATP binding"/>
    <property type="evidence" value="ECO:0007669"/>
    <property type="project" value="UniProtKB-KW"/>
</dbReference>
<dbReference type="GO" id="GO:0016887">
    <property type="term" value="F:ATP hydrolysis activity"/>
    <property type="evidence" value="ECO:0007669"/>
    <property type="project" value="RHEA"/>
</dbReference>
<dbReference type="GO" id="GO:0003676">
    <property type="term" value="F:nucleic acid binding"/>
    <property type="evidence" value="ECO:0007669"/>
    <property type="project" value="InterPro"/>
</dbReference>
<dbReference type="GO" id="GO:0003724">
    <property type="term" value="F:RNA helicase activity"/>
    <property type="evidence" value="ECO:0007669"/>
    <property type="project" value="UniProtKB-EC"/>
</dbReference>
<dbReference type="GO" id="GO:0006397">
    <property type="term" value="P:mRNA processing"/>
    <property type="evidence" value="ECO:0007669"/>
    <property type="project" value="UniProtKB-KW"/>
</dbReference>
<dbReference type="GO" id="GO:0008380">
    <property type="term" value="P:RNA splicing"/>
    <property type="evidence" value="ECO:0007669"/>
    <property type="project" value="UniProtKB-KW"/>
</dbReference>
<dbReference type="CDD" id="cd18787">
    <property type="entry name" value="SF2_C_DEAD"/>
    <property type="match status" value="1"/>
</dbReference>
<dbReference type="Gene3D" id="3.40.50.300">
    <property type="entry name" value="P-loop containing nucleotide triphosphate hydrolases"/>
    <property type="match status" value="2"/>
</dbReference>
<dbReference type="InterPro" id="IPR011545">
    <property type="entry name" value="DEAD/DEAH_box_helicase_dom"/>
</dbReference>
<dbReference type="InterPro" id="IPR014001">
    <property type="entry name" value="Helicase_ATP-bd"/>
</dbReference>
<dbReference type="InterPro" id="IPR001650">
    <property type="entry name" value="Helicase_C-like"/>
</dbReference>
<dbReference type="InterPro" id="IPR027417">
    <property type="entry name" value="P-loop_NTPase"/>
</dbReference>
<dbReference type="InterPro" id="IPR000629">
    <property type="entry name" value="RNA-helicase_DEAD-box_CS"/>
</dbReference>
<dbReference type="InterPro" id="IPR014014">
    <property type="entry name" value="RNA_helicase_DEAD_Q_motif"/>
</dbReference>
<dbReference type="PANTHER" id="PTHR47958">
    <property type="entry name" value="ATP-DEPENDENT RNA HELICASE DBP3"/>
    <property type="match status" value="1"/>
</dbReference>
<dbReference type="Pfam" id="PF00270">
    <property type="entry name" value="DEAD"/>
    <property type="match status" value="1"/>
</dbReference>
<dbReference type="Pfam" id="PF00271">
    <property type="entry name" value="Helicase_C"/>
    <property type="match status" value="1"/>
</dbReference>
<dbReference type="SMART" id="SM00487">
    <property type="entry name" value="DEXDc"/>
    <property type="match status" value="1"/>
</dbReference>
<dbReference type="SMART" id="SM00490">
    <property type="entry name" value="HELICc"/>
    <property type="match status" value="1"/>
</dbReference>
<dbReference type="SUPFAM" id="SSF52540">
    <property type="entry name" value="P-loop containing nucleoside triphosphate hydrolases"/>
    <property type="match status" value="1"/>
</dbReference>
<dbReference type="PROSITE" id="PS00039">
    <property type="entry name" value="DEAD_ATP_HELICASE"/>
    <property type="match status" value="1"/>
</dbReference>
<dbReference type="PROSITE" id="PS51192">
    <property type="entry name" value="HELICASE_ATP_BIND_1"/>
    <property type="match status" value="1"/>
</dbReference>
<dbReference type="PROSITE" id="PS51194">
    <property type="entry name" value="HELICASE_CTER"/>
    <property type="match status" value="1"/>
</dbReference>
<dbReference type="PROSITE" id="PS51195">
    <property type="entry name" value="Q_MOTIF"/>
    <property type="match status" value="1"/>
</dbReference>
<accession>A5DU73</accession>